<sequence>MLRRGHLAFRDVAIEFPQEEWKCLDPAQRTLYREVMVENYRNLVFLGICLPDLSVISMLEQRRDPRNLQSEVKIANNPGGRECIKGVNAESSSKLGSNAGNKSLKNQLGLTFQLHLSELQLFQAERNISGCKHVEKPINNSLVSPLQKIYSSVKSHILNKYRNDFDDSPFLPQEQKAQIREKPCECNEHGKAFRVSSRLANNQVIHTADNPYKCNECDKVFSNSSNLVQHQRIHTGEKPYKCHECGKLFNRISLLARHQRIHTGEKPYKCHECGKVFTQNSHLANHHRIHTGEKPYKCNECGKVFNRNAHLARHQKIHSGEKPYKCKECGKAFSGGSGLTAHLVIHTGEKLYKCNKCGKVFNRNAHLTRHQRIHTGEKPYECKECGKVFRHKFCLTNHHRMHTGEQPYKCNECGKAFRDCSGLTAHLLIHTGEKPYKCKECAKVFRHRLSLSNHQRFHTGEKPYRCDECGKDFTRNSNLANHHRIHTGEKPYKCSECHKVFSHNSHLARHRQIHTGEKSYKCNECGKVFSHKLYLKKHERIHTGEKPYRCHECGKDFTRNSNLANHHRIHTGEKPYR</sequence>
<accession>Q6PDB4</accession>
<accession>B4DNA6</accession>
<evidence type="ECO:0000255" key="1">
    <source>
        <dbReference type="PROSITE-ProRule" id="PRU00042"/>
    </source>
</evidence>
<evidence type="ECO:0000255" key="2">
    <source>
        <dbReference type="PROSITE-ProRule" id="PRU00119"/>
    </source>
</evidence>
<evidence type="ECO:0000303" key="3">
    <source>
    </source>
</evidence>
<name>ZN880_HUMAN</name>
<comment type="alternative products">
    <event type="alternative splicing"/>
    <isoform>
        <id>Q6PDB4-1</id>
        <name>1</name>
        <sequence type="displayed"/>
    </isoform>
    <isoform>
        <id>Q6PDB4-2</id>
        <name>2</name>
        <sequence type="described" ref="VSP_032509 VSP_032510"/>
    </isoform>
</comment>
<gene>
    <name type="primary">ZNF880</name>
</gene>
<proteinExistence type="evidence at transcript level"/>
<organism>
    <name type="scientific">Homo sapiens</name>
    <name type="common">Human</name>
    <dbReference type="NCBI Taxonomy" id="9606"/>
    <lineage>
        <taxon>Eukaryota</taxon>
        <taxon>Metazoa</taxon>
        <taxon>Chordata</taxon>
        <taxon>Craniata</taxon>
        <taxon>Vertebrata</taxon>
        <taxon>Euteleostomi</taxon>
        <taxon>Mammalia</taxon>
        <taxon>Eutheria</taxon>
        <taxon>Euarchontoglires</taxon>
        <taxon>Primates</taxon>
        <taxon>Haplorrhini</taxon>
        <taxon>Catarrhini</taxon>
        <taxon>Hominidae</taxon>
        <taxon>Homo</taxon>
    </lineage>
</organism>
<protein>
    <recommendedName>
        <fullName>Zinc finger protein 880</fullName>
    </recommendedName>
</protein>
<dbReference type="EMBL" id="AK297834">
    <property type="protein sequence ID" value="BAG60168.1"/>
    <property type="molecule type" value="mRNA"/>
</dbReference>
<dbReference type="EMBL" id="AC010320">
    <property type="status" value="NOT_ANNOTATED_CDS"/>
    <property type="molecule type" value="Genomic_DNA"/>
</dbReference>
<dbReference type="EMBL" id="AC010332">
    <property type="status" value="NOT_ANNOTATED_CDS"/>
    <property type="molecule type" value="Genomic_DNA"/>
</dbReference>
<dbReference type="EMBL" id="BC058819">
    <property type="protein sequence ID" value="AAH58819.1"/>
    <property type="molecule type" value="mRNA"/>
</dbReference>
<dbReference type="CCDS" id="CCDS46164.1">
    <molecule id="Q6PDB4-1"/>
</dbReference>
<dbReference type="RefSeq" id="NP_001138906.1">
    <molecule id="Q6PDB4-1"/>
    <property type="nucleotide sequence ID" value="NM_001145434.2"/>
</dbReference>
<dbReference type="RefSeq" id="XP_016882301.1">
    <molecule id="Q6PDB4-1"/>
    <property type="nucleotide sequence ID" value="XM_017026812.3"/>
</dbReference>
<dbReference type="SMR" id="Q6PDB4"/>
<dbReference type="BioGRID" id="134720">
    <property type="interactions" value="1"/>
</dbReference>
<dbReference type="STRING" id="9606.ENSP00000406318"/>
<dbReference type="GlyGen" id="Q6PDB4">
    <property type="glycosylation" value="2 sites, 1 N-linked glycan (1 site), 1 O-linked glycan (1 site)"/>
</dbReference>
<dbReference type="iPTMnet" id="Q6PDB4"/>
<dbReference type="PhosphoSitePlus" id="Q6PDB4"/>
<dbReference type="SwissPalm" id="Q6PDB4"/>
<dbReference type="BioMuta" id="ZNF880"/>
<dbReference type="DMDM" id="172046155"/>
<dbReference type="jPOST" id="Q6PDB4"/>
<dbReference type="MassIVE" id="Q6PDB4"/>
<dbReference type="PaxDb" id="9606-ENSP00000406318"/>
<dbReference type="PeptideAtlas" id="Q6PDB4"/>
<dbReference type="ProteomicsDB" id="67075">
    <molecule id="Q6PDB4-1"/>
</dbReference>
<dbReference type="Antibodypedia" id="52850">
    <property type="antibodies" value="4 antibodies from 4 providers"/>
</dbReference>
<dbReference type="DNASU" id="400713"/>
<dbReference type="Ensembl" id="ENST00000344085.9">
    <molecule id="Q6PDB4-2"/>
    <property type="protein sequence ID" value="ENSP00000343625.5"/>
    <property type="gene ID" value="ENSG00000221923.9"/>
</dbReference>
<dbReference type="Ensembl" id="ENST00000422689.3">
    <molecule id="Q6PDB4-1"/>
    <property type="protein sequence ID" value="ENSP00000406318.2"/>
    <property type="gene ID" value="ENSG00000221923.9"/>
</dbReference>
<dbReference type="GeneID" id="400713"/>
<dbReference type="KEGG" id="hsa:400713"/>
<dbReference type="MANE-Select" id="ENST00000422689.3">
    <property type="protein sequence ID" value="ENSP00000406318.2"/>
    <property type="RefSeq nucleotide sequence ID" value="NM_001145434.2"/>
    <property type="RefSeq protein sequence ID" value="NP_001138906.1"/>
</dbReference>
<dbReference type="UCSC" id="uc002pzc.4">
    <molecule id="Q6PDB4-1"/>
    <property type="organism name" value="human"/>
</dbReference>
<dbReference type="AGR" id="HGNC:37249"/>
<dbReference type="CTD" id="400713"/>
<dbReference type="DisGeNET" id="400713"/>
<dbReference type="GeneCards" id="ZNF880"/>
<dbReference type="HGNC" id="HGNC:37249">
    <property type="gene designation" value="ZNF880"/>
</dbReference>
<dbReference type="HPA" id="ENSG00000221923">
    <property type="expression patterns" value="Low tissue specificity"/>
</dbReference>
<dbReference type="neXtProt" id="NX_Q6PDB4"/>
<dbReference type="OpenTargets" id="ENSG00000221923"/>
<dbReference type="PharmGKB" id="PA165395098"/>
<dbReference type="VEuPathDB" id="HostDB:ENSG00000221923"/>
<dbReference type="eggNOG" id="KOG1721">
    <property type="taxonomic scope" value="Eukaryota"/>
</dbReference>
<dbReference type="GeneTree" id="ENSGT00940000163013"/>
<dbReference type="HOGENOM" id="CLU_002678_69_11_1"/>
<dbReference type="InParanoid" id="Q6PDB4"/>
<dbReference type="OMA" id="NHHRMHT"/>
<dbReference type="OrthoDB" id="6077919at2759"/>
<dbReference type="PAN-GO" id="Q6PDB4">
    <property type="GO annotations" value="4 GO annotations based on evolutionary models"/>
</dbReference>
<dbReference type="PhylomeDB" id="Q6PDB4"/>
<dbReference type="TreeFam" id="TF341892"/>
<dbReference type="PathwayCommons" id="Q6PDB4"/>
<dbReference type="BioGRID-ORCS" id="400713">
    <property type="hits" value="15 hits in 1138 CRISPR screens"/>
</dbReference>
<dbReference type="ChiTaRS" id="ZNF880">
    <property type="organism name" value="human"/>
</dbReference>
<dbReference type="GenomeRNAi" id="400713"/>
<dbReference type="Pharos" id="Q6PDB4">
    <property type="development level" value="Tdark"/>
</dbReference>
<dbReference type="PRO" id="PR:Q6PDB4"/>
<dbReference type="Proteomes" id="UP000005640">
    <property type="component" value="Chromosome 19"/>
</dbReference>
<dbReference type="RNAct" id="Q6PDB4">
    <property type="molecule type" value="protein"/>
</dbReference>
<dbReference type="Bgee" id="ENSG00000221923">
    <property type="expression patterns" value="Expressed in buccal mucosa cell and 167 other cell types or tissues"/>
</dbReference>
<dbReference type="ExpressionAtlas" id="Q6PDB4">
    <property type="expression patterns" value="baseline and differential"/>
</dbReference>
<dbReference type="GO" id="GO:0005634">
    <property type="term" value="C:nucleus"/>
    <property type="evidence" value="ECO:0000318"/>
    <property type="project" value="GO_Central"/>
</dbReference>
<dbReference type="GO" id="GO:0000981">
    <property type="term" value="F:DNA-binding transcription factor activity, RNA polymerase II-specific"/>
    <property type="evidence" value="ECO:0000318"/>
    <property type="project" value="GO_Central"/>
</dbReference>
<dbReference type="GO" id="GO:0000978">
    <property type="term" value="F:RNA polymerase II cis-regulatory region sequence-specific DNA binding"/>
    <property type="evidence" value="ECO:0000318"/>
    <property type="project" value="GO_Central"/>
</dbReference>
<dbReference type="GO" id="GO:0008270">
    <property type="term" value="F:zinc ion binding"/>
    <property type="evidence" value="ECO:0007669"/>
    <property type="project" value="UniProtKB-KW"/>
</dbReference>
<dbReference type="GO" id="GO:0006357">
    <property type="term" value="P:regulation of transcription by RNA polymerase II"/>
    <property type="evidence" value="ECO:0000318"/>
    <property type="project" value="GO_Central"/>
</dbReference>
<dbReference type="CDD" id="cd07765">
    <property type="entry name" value="KRAB_A-box"/>
    <property type="match status" value="1"/>
</dbReference>
<dbReference type="FunFam" id="3.30.160.60:FF:004137">
    <property type="match status" value="2"/>
</dbReference>
<dbReference type="FunFam" id="3.30.160.60:FF:002343">
    <property type="entry name" value="Zinc finger protein 33A"/>
    <property type="match status" value="2"/>
</dbReference>
<dbReference type="FunFam" id="3.30.160.60:FF:000133">
    <property type="entry name" value="Zinc finger protein 347"/>
    <property type="match status" value="1"/>
</dbReference>
<dbReference type="FunFam" id="3.30.160.60:FF:002402">
    <property type="entry name" value="Zinc finger protein 347"/>
    <property type="match status" value="2"/>
</dbReference>
<dbReference type="FunFam" id="3.30.160.60:FF:000016">
    <property type="entry name" value="zinc finger protein 37 homolog"/>
    <property type="match status" value="1"/>
</dbReference>
<dbReference type="FunFam" id="3.30.160.60:FF:002090">
    <property type="entry name" value="Zinc finger protein 473"/>
    <property type="match status" value="2"/>
</dbReference>
<dbReference type="FunFam" id="3.30.160.60:FF:000052">
    <property type="entry name" value="zinc finger protein 546 isoform X1"/>
    <property type="match status" value="1"/>
</dbReference>
<dbReference type="FunFam" id="3.30.160.60:FF:000197">
    <property type="entry name" value="Zinc finger protein 606"/>
    <property type="match status" value="1"/>
</dbReference>
<dbReference type="FunFam" id="3.30.160.60:FF:000290">
    <property type="entry name" value="Zinc finger protein 697 isoform X1"/>
    <property type="match status" value="1"/>
</dbReference>
<dbReference type="FunFam" id="3.30.160.60:FF:000710">
    <property type="entry name" value="Zinc finger protein 768"/>
    <property type="match status" value="1"/>
</dbReference>
<dbReference type="FunFam" id="3.30.160.60:FF:000394">
    <property type="entry name" value="Zinc finger protein 836"/>
    <property type="match status" value="1"/>
</dbReference>
<dbReference type="FunFam" id="3.30.160.60:FF:002710">
    <property type="entry name" value="Zinc finger protein 880"/>
    <property type="match status" value="1"/>
</dbReference>
<dbReference type="Gene3D" id="6.10.140.140">
    <property type="match status" value="1"/>
</dbReference>
<dbReference type="Gene3D" id="3.30.160.60">
    <property type="entry name" value="Classic Zinc Finger"/>
    <property type="match status" value="14"/>
</dbReference>
<dbReference type="InterPro" id="IPR001909">
    <property type="entry name" value="KRAB"/>
</dbReference>
<dbReference type="InterPro" id="IPR036051">
    <property type="entry name" value="KRAB_dom_sf"/>
</dbReference>
<dbReference type="InterPro" id="IPR036236">
    <property type="entry name" value="Znf_C2H2_sf"/>
</dbReference>
<dbReference type="InterPro" id="IPR013087">
    <property type="entry name" value="Znf_C2H2_type"/>
</dbReference>
<dbReference type="PANTHER" id="PTHR23235:SF178">
    <property type="entry name" value="C2H2-TYPE DOMAIN-CONTAINING PROTEIN-RELATED"/>
    <property type="match status" value="1"/>
</dbReference>
<dbReference type="PANTHER" id="PTHR23235">
    <property type="entry name" value="KRUEPPEL-LIKE TRANSCRIPTION FACTOR"/>
    <property type="match status" value="1"/>
</dbReference>
<dbReference type="Pfam" id="PF01352">
    <property type="entry name" value="KRAB"/>
    <property type="match status" value="1"/>
</dbReference>
<dbReference type="Pfam" id="PF00096">
    <property type="entry name" value="zf-C2H2"/>
    <property type="match status" value="13"/>
</dbReference>
<dbReference type="SMART" id="SM00349">
    <property type="entry name" value="KRAB"/>
    <property type="match status" value="1"/>
</dbReference>
<dbReference type="SMART" id="SM00355">
    <property type="entry name" value="ZnF_C2H2"/>
    <property type="match status" value="13"/>
</dbReference>
<dbReference type="SUPFAM" id="SSF57667">
    <property type="entry name" value="beta-beta-alpha zinc fingers"/>
    <property type="match status" value="8"/>
</dbReference>
<dbReference type="SUPFAM" id="SSF109640">
    <property type="entry name" value="KRAB domain (Kruppel-associated box)"/>
    <property type="match status" value="1"/>
</dbReference>
<dbReference type="PROSITE" id="PS50805">
    <property type="entry name" value="KRAB"/>
    <property type="match status" value="1"/>
</dbReference>
<dbReference type="PROSITE" id="PS00028">
    <property type="entry name" value="ZINC_FINGER_C2H2_1"/>
    <property type="match status" value="13"/>
</dbReference>
<dbReference type="PROSITE" id="PS50157">
    <property type="entry name" value="ZINC_FINGER_C2H2_2"/>
    <property type="match status" value="14"/>
</dbReference>
<feature type="chain" id="PRO_0000326033" description="Zinc finger protein 880">
    <location>
        <begin position="1"/>
        <end position="577"/>
    </location>
</feature>
<feature type="domain" description="KRAB" evidence="2">
    <location>
        <begin position="7"/>
        <end position="78"/>
    </location>
</feature>
<feature type="zinc finger region" description="C2H2-type 1; degenerate" evidence="1">
    <location>
        <begin position="184"/>
        <end position="206"/>
    </location>
</feature>
<feature type="zinc finger region" description="C2H2-type 2" evidence="1">
    <location>
        <begin position="212"/>
        <end position="234"/>
    </location>
</feature>
<feature type="zinc finger region" description="C2H2-type 3" evidence="1">
    <location>
        <begin position="240"/>
        <end position="262"/>
    </location>
</feature>
<feature type="zinc finger region" description="C2H2-type 4" evidence="1">
    <location>
        <begin position="268"/>
        <end position="290"/>
    </location>
</feature>
<feature type="zinc finger region" description="C2H2-type 5" evidence="1">
    <location>
        <begin position="296"/>
        <end position="318"/>
    </location>
</feature>
<feature type="zinc finger region" description="C2H2-type 6" evidence="1">
    <location>
        <begin position="324"/>
        <end position="346"/>
    </location>
</feature>
<feature type="zinc finger region" description="C2H2-type 7" evidence="1">
    <location>
        <begin position="352"/>
        <end position="374"/>
    </location>
</feature>
<feature type="zinc finger region" description="C2H2-type 8" evidence="1">
    <location>
        <begin position="380"/>
        <end position="402"/>
    </location>
</feature>
<feature type="zinc finger region" description="C2H2-type 9" evidence="1">
    <location>
        <begin position="408"/>
        <end position="430"/>
    </location>
</feature>
<feature type="zinc finger region" description="C2H2-type 10" evidence="1">
    <location>
        <begin position="436"/>
        <end position="458"/>
    </location>
</feature>
<feature type="zinc finger region" description="C2H2-type 11" evidence="1">
    <location>
        <begin position="464"/>
        <end position="486"/>
    </location>
</feature>
<feature type="zinc finger region" description="C2H2-type 12" evidence="1">
    <location>
        <begin position="492"/>
        <end position="514"/>
    </location>
</feature>
<feature type="zinc finger region" description="C2H2-type 13" evidence="1">
    <location>
        <begin position="520"/>
        <end position="542"/>
    </location>
</feature>
<feature type="zinc finger region" description="C2H2-type 14" evidence="1">
    <location>
        <begin position="548"/>
        <end position="570"/>
    </location>
</feature>
<feature type="splice variant" id="VSP_032509" description="In isoform 2." evidence="3">
    <original>GRECIKGVNAESSSKLGSN</original>
    <variation>SCSVTQAVVEWQSSVAIVA</variation>
    <location>
        <begin position="80"/>
        <end position="98"/>
    </location>
</feature>
<feature type="splice variant" id="VSP_032510" description="In isoform 2." evidence="3">
    <location>
        <begin position="99"/>
        <end position="577"/>
    </location>
</feature>
<keyword id="KW-0025">Alternative splicing</keyword>
<keyword id="KW-0479">Metal-binding</keyword>
<keyword id="KW-1185">Reference proteome</keyword>
<keyword id="KW-0677">Repeat</keyword>
<keyword id="KW-0862">Zinc</keyword>
<keyword id="KW-0863">Zinc-finger</keyword>
<reference key="1">
    <citation type="journal article" date="2004" name="Nat. Genet.">
        <title>Complete sequencing and characterization of 21,243 full-length human cDNAs.</title>
        <authorList>
            <person name="Ota T."/>
            <person name="Suzuki Y."/>
            <person name="Nishikawa T."/>
            <person name="Otsuki T."/>
            <person name="Sugiyama T."/>
            <person name="Irie R."/>
            <person name="Wakamatsu A."/>
            <person name="Hayashi K."/>
            <person name="Sato H."/>
            <person name="Nagai K."/>
            <person name="Kimura K."/>
            <person name="Makita H."/>
            <person name="Sekine M."/>
            <person name="Obayashi M."/>
            <person name="Nishi T."/>
            <person name="Shibahara T."/>
            <person name="Tanaka T."/>
            <person name="Ishii S."/>
            <person name="Yamamoto J."/>
            <person name="Saito K."/>
            <person name="Kawai Y."/>
            <person name="Isono Y."/>
            <person name="Nakamura Y."/>
            <person name="Nagahari K."/>
            <person name="Murakami K."/>
            <person name="Yasuda T."/>
            <person name="Iwayanagi T."/>
            <person name="Wagatsuma M."/>
            <person name="Shiratori A."/>
            <person name="Sudo H."/>
            <person name="Hosoiri T."/>
            <person name="Kaku Y."/>
            <person name="Kodaira H."/>
            <person name="Kondo H."/>
            <person name="Sugawara M."/>
            <person name="Takahashi M."/>
            <person name="Kanda K."/>
            <person name="Yokoi T."/>
            <person name="Furuya T."/>
            <person name="Kikkawa E."/>
            <person name="Omura Y."/>
            <person name="Abe K."/>
            <person name="Kamihara K."/>
            <person name="Katsuta N."/>
            <person name="Sato K."/>
            <person name="Tanikawa M."/>
            <person name="Yamazaki M."/>
            <person name="Ninomiya K."/>
            <person name="Ishibashi T."/>
            <person name="Yamashita H."/>
            <person name="Murakawa K."/>
            <person name="Fujimori K."/>
            <person name="Tanai H."/>
            <person name="Kimata M."/>
            <person name="Watanabe M."/>
            <person name="Hiraoka S."/>
            <person name="Chiba Y."/>
            <person name="Ishida S."/>
            <person name="Ono Y."/>
            <person name="Takiguchi S."/>
            <person name="Watanabe S."/>
            <person name="Yosida M."/>
            <person name="Hotuta T."/>
            <person name="Kusano J."/>
            <person name="Kanehori K."/>
            <person name="Takahashi-Fujii A."/>
            <person name="Hara H."/>
            <person name="Tanase T.-O."/>
            <person name="Nomura Y."/>
            <person name="Togiya S."/>
            <person name="Komai F."/>
            <person name="Hara R."/>
            <person name="Takeuchi K."/>
            <person name="Arita M."/>
            <person name="Imose N."/>
            <person name="Musashino K."/>
            <person name="Yuuki H."/>
            <person name="Oshima A."/>
            <person name="Sasaki N."/>
            <person name="Aotsuka S."/>
            <person name="Yoshikawa Y."/>
            <person name="Matsunawa H."/>
            <person name="Ichihara T."/>
            <person name="Shiohata N."/>
            <person name="Sano S."/>
            <person name="Moriya S."/>
            <person name="Momiyama H."/>
            <person name="Satoh N."/>
            <person name="Takami S."/>
            <person name="Terashima Y."/>
            <person name="Suzuki O."/>
            <person name="Nakagawa S."/>
            <person name="Senoh A."/>
            <person name="Mizoguchi H."/>
            <person name="Goto Y."/>
            <person name="Shimizu F."/>
            <person name="Wakebe H."/>
            <person name="Hishigaki H."/>
            <person name="Watanabe T."/>
            <person name="Sugiyama A."/>
            <person name="Takemoto M."/>
            <person name="Kawakami B."/>
            <person name="Yamazaki M."/>
            <person name="Watanabe K."/>
            <person name="Kumagai A."/>
            <person name="Itakura S."/>
            <person name="Fukuzumi Y."/>
            <person name="Fujimori Y."/>
            <person name="Komiyama M."/>
            <person name="Tashiro H."/>
            <person name="Tanigami A."/>
            <person name="Fujiwara T."/>
            <person name="Ono T."/>
            <person name="Yamada K."/>
            <person name="Fujii Y."/>
            <person name="Ozaki K."/>
            <person name="Hirao M."/>
            <person name="Ohmori Y."/>
            <person name="Kawabata A."/>
            <person name="Hikiji T."/>
            <person name="Kobatake N."/>
            <person name="Inagaki H."/>
            <person name="Ikema Y."/>
            <person name="Okamoto S."/>
            <person name="Okitani R."/>
            <person name="Kawakami T."/>
            <person name="Noguchi S."/>
            <person name="Itoh T."/>
            <person name="Shigeta K."/>
            <person name="Senba T."/>
            <person name="Matsumura K."/>
            <person name="Nakajima Y."/>
            <person name="Mizuno T."/>
            <person name="Morinaga M."/>
            <person name="Sasaki M."/>
            <person name="Togashi T."/>
            <person name="Oyama M."/>
            <person name="Hata H."/>
            <person name="Watanabe M."/>
            <person name="Komatsu T."/>
            <person name="Mizushima-Sugano J."/>
            <person name="Satoh T."/>
            <person name="Shirai Y."/>
            <person name="Takahashi Y."/>
            <person name="Nakagawa K."/>
            <person name="Okumura K."/>
            <person name="Nagase T."/>
            <person name="Nomura N."/>
            <person name="Kikuchi H."/>
            <person name="Masuho Y."/>
            <person name="Yamashita R."/>
            <person name="Nakai K."/>
            <person name="Yada T."/>
            <person name="Nakamura Y."/>
            <person name="Ohara O."/>
            <person name="Isogai T."/>
            <person name="Sugano S."/>
        </authorList>
    </citation>
    <scope>NUCLEOTIDE SEQUENCE [LARGE SCALE MRNA] (ISOFORM 1)</scope>
    <source>
        <tissue>Heart</tissue>
    </source>
</reference>
<reference key="2">
    <citation type="journal article" date="2004" name="Nature">
        <title>The DNA sequence and biology of human chromosome 19.</title>
        <authorList>
            <person name="Grimwood J."/>
            <person name="Gordon L.A."/>
            <person name="Olsen A.S."/>
            <person name="Terry A."/>
            <person name="Schmutz J."/>
            <person name="Lamerdin J.E."/>
            <person name="Hellsten U."/>
            <person name="Goodstein D."/>
            <person name="Couronne O."/>
            <person name="Tran-Gyamfi M."/>
            <person name="Aerts A."/>
            <person name="Altherr M."/>
            <person name="Ashworth L."/>
            <person name="Bajorek E."/>
            <person name="Black S."/>
            <person name="Branscomb E."/>
            <person name="Caenepeel S."/>
            <person name="Carrano A.V."/>
            <person name="Caoile C."/>
            <person name="Chan Y.M."/>
            <person name="Christensen M."/>
            <person name="Cleland C.A."/>
            <person name="Copeland A."/>
            <person name="Dalin E."/>
            <person name="Dehal P."/>
            <person name="Denys M."/>
            <person name="Detter J.C."/>
            <person name="Escobar J."/>
            <person name="Flowers D."/>
            <person name="Fotopulos D."/>
            <person name="Garcia C."/>
            <person name="Georgescu A.M."/>
            <person name="Glavina T."/>
            <person name="Gomez M."/>
            <person name="Gonzales E."/>
            <person name="Groza M."/>
            <person name="Hammon N."/>
            <person name="Hawkins T."/>
            <person name="Haydu L."/>
            <person name="Ho I."/>
            <person name="Huang W."/>
            <person name="Israni S."/>
            <person name="Jett J."/>
            <person name="Kadner K."/>
            <person name="Kimball H."/>
            <person name="Kobayashi A."/>
            <person name="Larionov V."/>
            <person name="Leem S.-H."/>
            <person name="Lopez F."/>
            <person name="Lou Y."/>
            <person name="Lowry S."/>
            <person name="Malfatti S."/>
            <person name="Martinez D."/>
            <person name="McCready P.M."/>
            <person name="Medina C."/>
            <person name="Morgan J."/>
            <person name="Nelson K."/>
            <person name="Nolan M."/>
            <person name="Ovcharenko I."/>
            <person name="Pitluck S."/>
            <person name="Pollard M."/>
            <person name="Popkie A.P."/>
            <person name="Predki P."/>
            <person name="Quan G."/>
            <person name="Ramirez L."/>
            <person name="Rash S."/>
            <person name="Retterer J."/>
            <person name="Rodriguez A."/>
            <person name="Rogers S."/>
            <person name="Salamov A."/>
            <person name="Salazar A."/>
            <person name="She X."/>
            <person name="Smith D."/>
            <person name="Slezak T."/>
            <person name="Solovyev V."/>
            <person name="Thayer N."/>
            <person name="Tice H."/>
            <person name="Tsai M."/>
            <person name="Ustaszewska A."/>
            <person name="Vo N."/>
            <person name="Wagner M."/>
            <person name="Wheeler J."/>
            <person name="Wu K."/>
            <person name="Xie G."/>
            <person name="Yang J."/>
            <person name="Dubchak I."/>
            <person name="Furey T.S."/>
            <person name="DeJong P."/>
            <person name="Dickson M."/>
            <person name="Gordon D."/>
            <person name="Eichler E.E."/>
            <person name="Pennacchio L.A."/>
            <person name="Richardson P."/>
            <person name="Stubbs L."/>
            <person name="Rokhsar D.S."/>
            <person name="Myers R.M."/>
            <person name="Rubin E.M."/>
            <person name="Lucas S.M."/>
        </authorList>
    </citation>
    <scope>NUCLEOTIDE SEQUENCE [LARGE SCALE GENOMIC DNA]</scope>
</reference>
<reference key="3">
    <citation type="journal article" date="2004" name="Genome Res.">
        <title>The status, quality, and expansion of the NIH full-length cDNA project: the Mammalian Gene Collection (MGC).</title>
        <authorList>
            <consortium name="The MGC Project Team"/>
        </authorList>
    </citation>
    <scope>NUCLEOTIDE SEQUENCE [LARGE SCALE MRNA] (ISOFORM 2)</scope>
    <source>
        <tissue>Heart</tissue>
    </source>
</reference>